<organism>
    <name type="scientific">Synechococcus sp. (strain CC9311)</name>
    <dbReference type="NCBI Taxonomy" id="64471"/>
    <lineage>
        <taxon>Bacteria</taxon>
        <taxon>Bacillati</taxon>
        <taxon>Cyanobacteriota</taxon>
        <taxon>Cyanophyceae</taxon>
        <taxon>Synechococcales</taxon>
        <taxon>Synechococcaceae</taxon>
        <taxon>Synechococcus</taxon>
    </lineage>
</organism>
<accession>Q0IDJ3</accession>
<proteinExistence type="inferred from homology"/>
<dbReference type="EC" id="7.1.1.-" evidence="1"/>
<dbReference type="EMBL" id="CP000435">
    <property type="protein sequence ID" value="ABI46717.1"/>
    <property type="status" value="ALT_INIT"/>
    <property type="molecule type" value="Genomic_DNA"/>
</dbReference>
<dbReference type="SMR" id="Q0IDJ3"/>
<dbReference type="STRING" id="64471.sync_0243"/>
<dbReference type="KEGG" id="syg:sync_0243"/>
<dbReference type="eggNOG" id="COG0377">
    <property type="taxonomic scope" value="Bacteria"/>
</dbReference>
<dbReference type="HOGENOM" id="CLU_055737_2_0_3"/>
<dbReference type="OrthoDB" id="9786737at2"/>
<dbReference type="Proteomes" id="UP000001961">
    <property type="component" value="Chromosome"/>
</dbReference>
<dbReference type="GO" id="GO:0031676">
    <property type="term" value="C:plasma membrane-derived thylakoid membrane"/>
    <property type="evidence" value="ECO:0007669"/>
    <property type="project" value="UniProtKB-SubCell"/>
</dbReference>
<dbReference type="GO" id="GO:0045271">
    <property type="term" value="C:respiratory chain complex I"/>
    <property type="evidence" value="ECO:0007669"/>
    <property type="project" value="TreeGrafter"/>
</dbReference>
<dbReference type="GO" id="GO:0051539">
    <property type="term" value="F:4 iron, 4 sulfur cluster binding"/>
    <property type="evidence" value="ECO:0007669"/>
    <property type="project" value="UniProtKB-KW"/>
</dbReference>
<dbReference type="GO" id="GO:0005506">
    <property type="term" value="F:iron ion binding"/>
    <property type="evidence" value="ECO:0007669"/>
    <property type="project" value="UniProtKB-UniRule"/>
</dbReference>
<dbReference type="GO" id="GO:0008137">
    <property type="term" value="F:NADH dehydrogenase (ubiquinone) activity"/>
    <property type="evidence" value="ECO:0007669"/>
    <property type="project" value="InterPro"/>
</dbReference>
<dbReference type="GO" id="GO:0048038">
    <property type="term" value="F:quinone binding"/>
    <property type="evidence" value="ECO:0007669"/>
    <property type="project" value="UniProtKB-KW"/>
</dbReference>
<dbReference type="GO" id="GO:0009060">
    <property type="term" value="P:aerobic respiration"/>
    <property type="evidence" value="ECO:0007669"/>
    <property type="project" value="TreeGrafter"/>
</dbReference>
<dbReference type="GO" id="GO:0015990">
    <property type="term" value="P:electron transport coupled proton transport"/>
    <property type="evidence" value="ECO:0007669"/>
    <property type="project" value="TreeGrafter"/>
</dbReference>
<dbReference type="GO" id="GO:0019684">
    <property type="term" value="P:photosynthesis, light reaction"/>
    <property type="evidence" value="ECO:0007669"/>
    <property type="project" value="UniProtKB-UniRule"/>
</dbReference>
<dbReference type="FunFam" id="3.40.50.12280:FF:000003">
    <property type="entry name" value="NAD(P)H-quinone oxidoreductase subunit K, chloroplastic"/>
    <property type="match status" value="1"/>
</dbReference>
<dbReference type="Gene3D" id="3.40.50.12280">
    <property type="match status" value="1"/>
</dbReference>
<dbReference type="HAMAP" id="MF_01356">
    <property type="entry name" value="NDH1_NuoB"/>
    <property type="match status" value="1"/>
</dbReference>
<dbReference type="InterPro" id="IPR006137">
    <property type="entry name" value="NADH_UbQ_OxRdtase-like_20kDa"/>
</dbReference>
<dbReference type="InterPro" id="IPR006138">
    <property type="entry name" value="NADH_UQ_OxRdtase_20Kd_su"/>
</dbReference>
<dbReference type="NCBIfam" id="TIGR01957">
    <property type="entry name" value="nuoB_fam"/>
    <property type="match status" value="1"/>
</dbReference>
<dbReference type="NCBIfam" id="NF005012">
    <property type="entry name" value="PRK06411.1"/>
    <property type="match status" value="1"/>
</dbReference>
<dbReference type="PANTHER" id="PTHR11995">
    <property type="entry name" value="NADH DEHYDROGENASE"/>
    <property type="match status" value="1"/>
</dbReference>
<dbReference type="PANTHER" id="PTHR11995:SF14">
    <property type="entry name" value="NADH DEHYDROGENASE [UBIQUINONE] IRON-SULFUR PROTEIN 7, MITOCHONDRIAL"/>
    <property type="match status" value="1"/>
</dbReference>
<dbReference type="Pfam" id="PF01058">
    <property type="entry name" value="Oxidored_q6"/>
    <property type="match status" value="1"/>
</dbReference>
<dbReference type="SUPFAM" id="SSF56770">
    <property type="entry name" value="HydA/Nqo6-like"/>
    <property type="match status" value="1"/>
</dbReference>
<dbReference type="PROSITE" id="PS01150">
    <property type="entry name" value="COMPLEX1_20K"/>
    <property type="match status" value="1"/>
</dbReference>
<evidence type="ECO:0000255" key="1">
    <source>
        <dbReference type="HAMAP-Rule" id="MF_01356"/>
    </source>
</evidence>
<evidence type="ECO:0000305" key="2"/>
<feature type="chain" id="PRO_0000358492" description="NAD(P)H-quinone oxidoreductase subunit K">
    <location>
        <begin position="1"/>
        <end position="253"/>
    </location>
</feature>
<feature type="binding site" evidence="1">
    <location>
        <position position="68"/>
    </location>
    <ligand>
        <name>[4Fe-4S] cluster</name>
        <dbReference type="ChEBI" id="CHEBI:49883"/>
    </ligand>
</feature>
<feature type="binding site" evidence="1">
    <location>
        <position position="69"/>
    </location>
    <ligand>
        <name>[4Fe-4S] cluster</name>
        <dbReference type="ChEBI" id="CHEBI:49883"/>
    </ligand>
</feature>
<feature type="binding site" evidence="1">
    <location>
        <position position="133"/>
    </location>
    <ligand>
        <name>[4Fe-4S] cluster</name>
        <dbReference type="ChEBI" id="CHEBI:49883"/>
    </ligand>
</feature>
<feature type="binding site" evidence="1">
    <location>
        <position position="164"/>
    </location>
    <ligand>
        <name>[4Fe-4S] cluster</name>
        <dbReference type="ChEBI" id="CHEBI:49883"/>
    </ligand>
</feature>
<reference key="1">
    <citation type="journal article" date="2006" name="Proc. Natl. Acad. Sci. U.S.A.">
        <title>Genome sequence of Synechococcus CC9311: insights into adaptation to a coastal environment.</title>
        <authorList>
            <person name="Palenik B."/>
            <person name="Ren Q."/>
            <person name="Dupont C.L."/>
            <person name="Myers G.S."/>
            <person name="Heidelberg J.F."/>
            <person name="Badger J.H."/>
            <person name="Madupu R."/>
            <person name="Nelson W.C."/>
            <person name="Brinkac L.M."/>
            <person name="Dodson R.J."/>
            <person name="Durkin A.S."/>
            <person name="Daugherty S.C."/>
            <person name="Sullivan S.A."/>
            <person name="Khouri H."/>
            <person name="Mohamoud Y."/>
            <person name="Halpin R."/>
            <person name="Paulsen I.T."/>
        </authorList>
    </citation>
    <scope>NUCLEOTIDE SEQUENCE [LARGE SCALE GENOMIC DNA]</scope>
    <source>
        <strain>CC9311</strain>
    </source>
</reference>
<sequence>MTSTGDSPSIQSLRDLREASCGPVGGAAEGSPTVTNDLSENVILTSLDDLHNWARLSSLWPLLYGTACCFIEFAALLGSRFDFDRFGLVPRSSPRQADLLIVAGTVTMKMGPALVRLYEQMPEPKYVIAMGACTITGGMFSADSTTAVRGVDKLIPVDLYLPGCPPRPEAIFDAVIKLRKKVGNESVSDRRQLKQTHRYCTIDHAMVPVEPIVTGAYLRAETQVAALSPGVGVPMAAPEQTESAEPVSSGASS</sequence>
<keyword id="KW-0004">4Fe-4S</keyword>
<keyword id="KW-0408">Iron</keyword>
<keyword id="KW-0411">Iron-sulfur</keyword>
<keyword id="KW-0472">Membrane</keyword>
<keyword id="KW-0479">Metal-binding</keyword>
<keyword id="KW-0520">NAD</keyword>
<keyword id="KW-0521">NADP</keyword>
<keyword id="KW-0618">Plastoquinone</keyword>
<keyword id="KW-0874">Quinone</keyword>
<keyword id="KW-1185">Reference proteome</keyword>
<keyword id="KW-0793">Thylakoid</keyword>
<keyword id="KW-1278">Translocase</keyword>
<keyword id="KW-0813">Transport</keyword>
<comment type="function">
    <text evidence="1">NDH-1 shuttles electrons from an unknown electron donor, via FMN and iron-sulfur (Fe-S) centers, to quinones in the respiratory and/or the photosynthetic chain. The immediate electron acceptor for the enzyme in this species is believed to be plastoquinone. Couples the redox reaction to proton translocation, and thus conserves the redox energy in a proton gradient. Cyanobacterial NDH-1 also plays a role in inorganic carbon-concentration.</text>
</comment>
<comment type="catalytic activity">
    <reaction evidence="1">
        <text>a plastoquinone + NADH + (n+1) H(+)(in) = a plastoquinol + NAD(+) + n H(+)(out)</text>
        <dbReference type="Rhea" id="RHEA:42608"/>
        <dbReference type="Rhea" id="RHEA-COMP:9561"/>
        <dbReference type="Rhea" id="RHEA-COMP:9562"/>
        <dbReference type="ChEBI" id="CHEBI:15378"/>
        <dbReference type="ChEBI" id="CHEBI:17757"/>
        <dbReference type="ChEBI" id="CHEBI:57540"/>
        <dbReference type="ChEBI" id="CHEBI:57945"/>
        <dbReference type="ChEBI" id="CHEBI:62192"/>
    </reaction>
</comment>
<comment type="catalytic activity">
    <reaction evidence="1">
        <text>a plastoquinone + NADPH + (n+1) H(+)(in) = a plastoquinol + NADP(+) + n H(+)(out)</text>
        <dbReference type="Rhea" id="RHEA:42612"/>
        <dbReference type="Rhea" id="RHEA-COMP:9561"/>
        <dbReference type="Rhea" id="RHEA-COMP:9562"/>
        <dbReference type="ChEBI" id="CHEBI:15378"/>
        <dbReference type="ChEBI" id="CHEBI:17757"/>
        <dbReference type="ChEBI" id="CHEBI:57783"/>
        <dbReference type="ChEBI" id="CHEBI:58349"/>
        <dbReference type="ChEBI" id="CHEBI:62192"/>
    </reaction>
</comment>
<comment type="cofactor">
    <cofactor evidence="1">
        <name>[4Fe-4S] cluster</name>
        <dbReference type="ChEBI" id="CHEBI:49883"/>
    </cofactor>
    <text evidence="1">Binds 1 [4Fe-4S] cluster.</text>
</comment>
<comment type="subunit">
    <text evidence="1">NDH-1 can be composed of about 15 different subunits; different subcomplexes with different compositions have been identified which probably have different functions.</text>
</comment>
<comment type="subcellular location">
    <subcellularLocation>
        <location evidence="1">Cellular thylakoid membrane</location>
        <topology evidence="1">Peripheral membrane protein</topology>
        <orientation evidence="1">Cytoplasmic side</orientation>
    </subcellularLocation>
</comment>
<comment type="similarity">
    <text evidence="1">Belongs to the complex I 20 kDa subunit family.</text>
</comment>
<comment type="sequence caution" evidence="2">
    <conflict type="erroneous initiation">
        <sequence resource="EMBL-CDS" id="ABI46717"/>
    </conflict>
</comment>
<gene>
    <name evidence="1" type="primary">ndhK</name>
    <name type="ordered locus">sync_0243</name>
</gene>
<protein>
    <recommendedName>
        <fullName evidence="1">NAD(P)H-quinone oxidoreductase subunit K</fullName>
        <ecNumber evidence="1">7.1.1.-</ecNumber>
    </recommendedName>
    <alternativeName>
        <fullName evidence="1">NAD(P)H dehydrogenase I subunit K</fullName>
    </alternativeName>
    <alternativeName>
        <fullName evidence="1">NDH-1 subunit K</fullName>
        <shortName evidence="1">NDH-K</shortName>
    </alternativeName>
</protein>
<name>NDHK_SYNS3</name>